<feature type="chain" id="PRO_0000269105" description="Small ribosomal subunit protein uS14">
    <location>
        <begin position="1"/>
        <end position="63"/>
    </location>
</feature>
<feature type="binding site" evidence="1">
    <location>
        <position position="26"/>
    </location>
    <ligand>
        <name>Zn(2+)</name>
        <dbReference type="ChEBI" id="CHEBI:29105"/>
    </ligand>
</feature>
<feature type="binding site" evidence="1">
    <location>
        <position position="29"/>
    </location>
    <ligand>
        <name>Zn(2+)</name>
        <dbReference type="ChEBI" id="CHEBI:29105"/>
    </ligand>
</feature>
<feature type="binding site" evidence="1">
    <location>
        <position position="42"/>
    </location>
    <ligand>
        <name>Zn(2+)</name>
        <dbReference type="ChEBI" id="CHEBI:29105"/>
    </ligand>
</feature>
<feature type="binding site" evidence="1">
    <location>
        <position position="45"/>
    </location>
    <ligand>
        <name>Zn(2+)</name>
        <dbReference type="ChEBI" id="CHEBI:29105"/>
    </ligand>
</feature>
<accession>Q7NEG5</accession>
<proteinExistence type="inferred from homology"/>
<name>RS14Z_GLOVI</name>
<organism>
    <name type="scientific">Gloeobacter violaceus (strain ATCC 29082 / PCC 7421)</name>
    <dbReference type="NCBI Taxonomy" id="251221"/>
    <lineage>
        <taxon>Bacteria</taxon>
        <taxon>Bacillati</taxon>
        <taxon>Cyanobacteriota</taxon>
        <taxon>Cyanophyceae</taxon>
        <taxon>Gloeobacterales</taxon>
        <taxon>Gloeobacteraceae</taxon>
        <taxon>Gloeobacter</taxon>
    </lineage>
</organism>
<reference key="1">
    <citation type="journal article" date="2003" name="DNA Res.">
        <title>Complete genome structure of Gloeobacter violaceus PCC 7421, a cyanobacterium that lacks thylakoids.</title>
        <authorList>
            <person name="Nakamura Y."/>
            <person name="Kaneko T."/>
            <person name="Sato S."/>
            <person name="Mimuro M."/>
            <person name="Miyashita H."/>
            <person name="Tsuchiya T."/>
            <person name="Sasamoto S."/>
            <person name="Watanabe A."/>
            <person name="Kawashima K."/>
            <person name="Kishida Y."/>
            <person name="Kiyokawa C."/>
            <person name="Kohara M."/>
            <person name="Matsumoto M."/>
            <person name="Matsuno A."/>
            <person name="Nakazaki N."/>
            <person name="Shimpo S."/>
            <person name="Takeuchi C."/>
            <person name="Yamada M."/>
            <person name="Tabata S."/>
        </authorList>
    </citation>
    <scope>NUCLEOTIDE SEQUENCE [LARGE SCALE GENOMIC DNA]</scope>
    <source>
        <strain>ATCC 29082 / PCC 7421</strain>
    </source>
</reference>
<protein>
    <recommendedName>
        <fullName evidence="1">Small ribosomal subunit protein uS14</fullName>
    </recommendedName>
    <alternativeName>
        <fullName evidence="2">30S ribosomal protein S14 type Z</fullName>
    </alternativeName>
</protein>
<evidence type="ECO:0000255" key="1">
    <source>
        <dbReference type="HAMAP-Rule" id="MF_01364"/>
    </source>
</evidence>
<evidence type="ECO:0000305" key="2"/>
<dbReference type="EMBL" id="BA000045">
    <property type="protein sequence ID" value="BAC91855.1"/>
    <property type="status" value="ALT_INIT"/>
    <property type="molecule type" value="Genomic_DNA"/>
</dbReference>
<dbReference type="RefSeq" id="NP_926860.1">
    <property type="nucleotide sequence ID" value="NC_005125.1"/>
</dbReference>
<dbReference type="RefSeq" id="WP_011143902.1">
    <property type="nucleotide sequence ID" value="NC_005125.1"/>
</dbReference>
<dbReference type="SMR" id="Q7NEG5"/>
<dbReference type="FunCoup" id="Q7NEG5">
    <property type="interactions" value="68"/>
</dbReference>
<dbReference type="STRING" id="251221.gene:10761431"/>
<dbReference type="EnsemblBacteria" id="BAC91855">
    <property type="protein sequence ID" value="BAC91855"/>
    <property type="gene ID" value="BAC91855"/>
</dbReference>
<dbReference type="KEGG" id="gvi:gsl3914"/>
<dbReference type="PATRIC" id="fig|251221.4.peg.3947"/>
<dbReference type="eggNOG" id="COG0199">
    <property type="taxonomic scope" value="Bacteria"/>
</dbReference>
<dbReference type="HOGENOM" id="CLU_139869_3_1_3"/>
<dbReference type="InParanoid" id="Q7NEG5"/>
<dbReference type="OrthoDB" id="9810484at2"/>
<dbReference type="PhylomeDB" id="Q7NEG5"/>
<dbReference type="Proteomes" id="UP000000557">
    <property type="component" value="Chromosome"/>
</dbReference>
<dbReference type="GO" id="GO:0005737">
    <property type="term" value="C:cytoplasm"/>
    <property type="evidence" value="ECO:0007669"/>
    <property type="project" value="UniProtKB-ARBA"/>
</dbReference>
<dbReference type="GO" id="GO:0015935">
    <property type="term" value="C:small ribosomal subunit"/>
    <property type="evidence" value="ECO:0000318"/>
    <property type="project" value="GO_Central"/>
</dbReference>
<dbReference type="GO" id="GO:0019843">
    <property type="term" value="F:rRNA binding"/>
    <property type="evidence" value="ECO:0007669"/>
    <property type="project" value="UniProtKB-UniRule"/>
</dbReference>
<dbReference type="GO" id="GO:0003735">
    <property type="term" value="F:structural constituent of ribosome"/>
    <property type="evidence" value="ECO:0000318"/>
    <property type="project" value="GO_Central"/>
</dbReference>
<dbReference type="GO" id="GO:0008270">
    <property type="term" value="F:zinc ion binding"/>
    <property type="evidence" value="ECO:0007669"/>
    <property type="project" value="UniProtKB-UniRule"/>
</dbReference>
<dbReference type="GO" id="GO:0006412">
    <property type="term" value="P:translation"/>
    <property type="evidence" value="ECO:0000318"/>
    <property type="project" value="GO_Central"/>
</dbReference>
<dbReference type="Gene3D" id="4.10.830.10">
    <property type="entry name" value="30s Ribosomal Protein S14, Chain N"/>
    <property type="match status" value="1"/>
</dbReference>
<dbReference type="HAMAP" id="MF_01364_B">
    <property type="entry name" value="Ribosomal_uS14_2_B"/>
    <property type="match status" value="1"/>
</dbReference>
<dbReference type="InterPro" id="IPR001209">
    <property type="entry name" value="Ribosomal_uS14"/>
</dbReference>
<dbReference type="InterPro" id="IPR023053">
    <property type="entry name" value="Ribosomal_uS14_bact"/>
</dbReference>
<dbReference type="InterPro" id="IPR018271">
    <property type="entry name" value="Ribosomal_uS14_CS"/>
</dbReference>
<dbReference type="InterPro" id="IPR043140">
    <property type="entry name" value="Ribosomal_uS14_sf"/>
</dbReference>
<dbReference type="NCBIfam" id="NF005974">
    <property type="entry name" value="PRK08061.1"/>
    <property type="match status" value="1"/>
</dbReference>
<dbReference type="PANTHER" id="PTHR19836">
    <property type="entry name" value="30S RIBOSOMAL PROTEIN S14"/>
    <property type="match status" value="1"/>
</dbReference>
<dbReference type="PANTHER" id="PTHR19836:SF19">
    <property type="entry name" value="SMALL RIBOSOMAL SUBUNIT PROTEIN US14M"/>
    <property type="match status" value="1"/>
</dbReference>
<dbReference type="Pfam" id="PF00253">
    <property type="entry name" value="Ribosomal_S14"/>
    <property type="match status" value="1"/>
</dbReference>
<dbReference type="SUPFAM" id="SSF57716">
    <property type="entry name" value="Glucocorticoid receptor-like (DNA-binding domain)"/>
    <property type="match status" value="1"/>
</dbReference>
<dbReference type="PROSITE" id="PS00527">
    <property type="entry name" value="RIBOSOMAL_S14"/>
    <property type="match status" value="1"/>
</dbReference>
<keyword id="KW-0479">Metal-binding</keyword>
<keyword id="KW-1185">Reference proteome</keyword>
<keyword id="KW-0687">Ribonucleoprotein</keyword>
<keyword id="KW-0689">Ribosomal protein</keyword>
<keyword id="KW-0694">RNA-binding</keyword>
<keyword id="KW-0699">rRNA-binding</keyword>
<keyword id="KW-0862">Zinc</keyword>
<gene>
    <name evidence="1" type="primary">rpsZ</name>
    <name evidence="1" type="synonym">rps14</name>
    <name evidence="1" type="synonym">rpsN</name>
    <name type="ordered locus">gsl3914</name>
</gene>
<comment type="function">
    <text evidence="1">Binds 16S rRNA, required for the assembly of 30S particles and may also be responsible for determining the conformation of the 16S rRNA at the A site.</text>
</comment>
<comment type="cofactor">
    <cofactor evidence="1">
        <name>Zn(2+)</name>
        <dbReference type="ChEBI" id="CHEBI:29105"/>
    </cofactor>
    <text evidence="1">Binds 1 zinc ion per subunit.</text>
</comment>
<comment type="subunit">
    <text evidence="1">Part of the 30S ribosomal subunit. Contacts proteins S3 and S10.</text>
</comment>
<comment type="similarity">
    <text evidence="1">Belongs to the universal ribosomal protein uS14 family. Zinc-binding uS14 subfamily.</text>
</comment>
<comment type="sequence caution" evidence="2">
    <conflict type="erroneous initiation">
        <sequence resource="EMBL-CDS" id="BAC91855"/>
    </conflict>
</comment>
<sequence length="63" mass="7485">MVEREKKRQKLVLKGKLSDTRLHNRCWRCGRPRGYIRDFGLCRICFREMAHQGLLPGVVKASW</sequence>